<evidence type="ECO:0000255" key="1">
    <source>
        <dbReference type="PROSITE-ProRule" id="PRU00316"/>
    </source>
</evidence>
<reference key="1">
    <citation type="journal article" date="2001" name="Nature">
        <title>The DNA sequence and comparative analysis of human chromosome 20.</title>
        <authorList>
            <person name="Deloukas P."/>
            <person name="Matthews L.H."/>
            <person name="Ashurst J.L."/>
            <person name="Burton J."/>
            <person name="Gilbert J.G.R."/>
            <person name="Jones M."/>
            <person name="Stavrides G."/>
            <person name="Almeida J.P."/>
            <person name="Babbage A.K."/>
            <person name="Bagguley C.L."/>
            <person name="Bailey J."/>
            <person name="Barlow K.F."/>
            <person name="Bates K.N."/>
            <person name="Beard L.M."/>
            <person name="Beare D.M."/>
            <person name="Beasley O.P."/>
            <person name="Bird C.P."/>
            <person name="Blakey S.E."/>
            <person name="Bridgeman A.M."/>
            <person name="Brown A.J."/>
            <person name="Buck D."/>
            <person name="Burrill W.D."/>
            <person name="Butler A.P."/>
            <person name="Carder C."/>
            <person name="Carter N.P."/>
            <person name="Chapman J.C."/>
            <person name="Clamp M."/>
            <person name="Clark G."/>
            <person name="Clark L.N."/>
            <person name="Clark S.Y."/>
            <person name="Clee C.M."/>
            <person name="Clegg S."/>
            <person name="Cobley V.E."/>
            <person name="Collier R.E."/>
            <person name="Connor R.E."/>
            <person name="Corby N.R."/>
            <person name="Coulson A."/>
            <person name="Coville G.J."/>
            <person name="Deadman R."/>
            <person name="Dhami P.D."/>
            <person name="Dunn M."/>
            <person name="Ellington A.G."/>
            <person name="Frankland J.A."/>
            <person name="Fraser A."/>
            <person name="French L."/>
            <person name="Garner P."/>
            <person name="Grafham D.V."/>
            <person name="Griffiths C."/>
            <person name="Griffiths M.N.D."/>
            <person name="Gwilliam R."/>
            <person name="Hall R.E."/>
            <person name="Hammond S."/>
            <person name="Harley J.L."/>
            <person name="Heath P.D."/>
            <person name="Ho S."/>
            <person name="Holden J.L."/>
            <person name="Howden P.J."/>
            <person name="Huckle E."/>
            <person name="Hunt A.R."/>
            <person name="Hunt S.E."/>
            <person name="Jekosch K."/>
            <person name="Johnson C.M."/>
            <person name="Johnson D."/>
            <person name="Kay M.P."/>
            <person name="Kimberley A.M."/>
            <person name="King A."/>
            <person name="Knights A."/>
            <person name="Laird G.K."/>
            <person name="Lawlor S."/>
            <person name="Lehvaeslaiho M.H."/>
            <person name="Leversha M.A."/>
            <person name="Lloyd C."/>
            <person name="Lloyd D.M."/>
            <person name="Lovell J.D."/>
            <person name="Marsh V.L."/>
            <person name="Martin S.L."/>
            <person name="McConnachie L.J."/>
            <person name="McLay K."/>
            <person name="McMurray A.A."/>
            <person name="Milne S.A."/>
            <person name="Mistry D."/>
            <person name="Moore M.J.F."/>
            <person name="Mullikin J.C."/>
            <person name="Nickerson T."/>
            <person name="Oliver K."/>
            <person name="Parker A."/>
            <person name="Patel R."/>
            <person name="Pearce T.A.V."/>
            <person name="Peck A.I."/>
            <person name="Phillimore B.J.C.T."/>
            <person name="Prathalingam S.R."/>
            <person name="Plumb R.W."/>
            <person name="Ramsay H."/>
            <person name="Rice C.M."/>
            <person name="Ross M.T."/>
            <person name="Scott C.E."/>
            <person name="Sehra H.K."/>
            <person name="Shownkeen R."/>
            <person name="Sims S."/>
            <person name="Skuce C.D."/>
            <person name="Smith M.L."/>
            <person name="Soderlund C."/>
            <person name="Steward C.A."/>
            <person name="Sulston J.E."/>
            <person name="Swann R.M."/>
            <person name="Sycamore N."/>
            <person name="Taylor R."/>
            <person name="Tee L."/>
            <person name="Thomas D.W."/>
            <person name="Thorpe A."/>
            <person name="Tracey A."/>
            <person name="Tromans A.C."/>
            <person name="Vaudin M."/>
            <person name="Wall M."/>
            <person name="Wallis J.M."/>
            <person name="Whitehead S.L."/>
            <person name="Whittaker P."/>
            <person name="Willey D.L."/>
            <person name="Williams L."/>
            <person name="Williams S.A."/>
            <person name="Wilming L."/>
            <person name="Wray P.W."/>
            <person name="Hubbard T."/>
            <person name="Durbin R.M."/>
            <person name="Bentley D.R."/>
            <person name="Beck S."/>
            <person name="Rogers J."/>
        </authorList>
    </citation>
    <scope>NUCLEOTIDE SEQUENCE [LARGE SCALE GENOMIC DNA]</scope>
</reference>
<reference key="2">
    <citation type="journal article" date="2004" name="Genome Res.">
        <title>The status, quality, and expansion of the NIH full-length cDNA project: the Mammalian Gene Collection (MGC).</title>
        <authorList>
            <consortium name="The MGC Project Team"/>
        </authorList>
    </citation>
    <scope>NUCLEOTIDE SEQUENCE [LARGE SCALE MRNA]</scope>
    <source>
        <tissue>Cervix</tissue>
    </source>
</reference>
<dbReference type="EMBL" id="AL121829">
    <property type="status" value="NOT_ANNOTATED_CDS"/>
    <property type="molecule type" value="Genomic_DNA"/>
</dbReference>
<dbReference type="EMBL" id="BC000912">
    <property type="protein sequence ID" value="AAH00912.1"/>
    <property type="molecule type" value="mRNA"/>
</dbReference>
<dbReference type="CCDS" id="CCDS13526.1"/>
<dbReference type="RefSeq" id="NP_001306081.1">
    <property type="nucleotide sequence ID" value="NM_001319152.2"/>
</dbReference>
<dbReference type="RefSeq" id="NP_001306082.1">
    <property type="nucleotide sequence ID" value="NM_001319153.2"/>
</dbReference>
<dbReference type="RefSeq" id="NP_076964.1">
    <property type="nucleotide sequence ID" value="NM_024059.3"/>
</dbReference>
<dbReference type="RefSeq" id="XP_011527343.1">
    <property type="nucleotide sequence ID" value="XM_011529041.3"/>
</dbReference>
<dbReference type="RefSeq" id="XP_047296424.1">
    <property type="nucleotide sequence ID" value="XM_047440468.1"/>
</dbReference>
<dbReference type="RefSeq" id="XP_054179951.1">
    <property type="nucleotide sequence ID" value="XM_054323976.1"/>
</dbReference>
<dbReference type="RefSeq" id="XP_054179952.1">
    <property type="nucleotide sequence ID" value="XM_054323977.1"/>
</dbReference>
<dbReference type="SMR" id="Q9BVV2"/>
<dbReference type="BioGRID" id="122493">
    <property type="interactions" value="68"/>
</dbReference>
<dbReference type="FunCoup" id="Q9BVV2">
    <property type="interactions" value="23"/>
</dbReference>
<dbReference type="IntAct" id="Q9BVV2">
    <property type="interactions" value="61"/>
</dbReference>
<dbReference type="MINT" id="Q9BVV2"/>
<dbReference type="STRING" id="9606.ENSP00000480914"/>
<dbReference type="iPTMnet" id="Q9BVV2"/>
<dbReference type="PhosphoSitePlus" id="Q9BVV2"/>
<dbReference type="BioMuta" id="FNDC11"/>
<dbReference type="DMDM" id="74761293"/>
<dbReference type="jPOST" id="Q9BVV2"/>
<dbReference type="MassIVE" id="Q9BVV2"/>
<dbReference type="PaxDb" id="9606-ENSP00000480914"/>
<dbReference type="PeptideAtlas" id="Q9BVV2"/>
<dbReference type="ProteomicsDB" id="79235"/>
<dbReference type="Antibodypedia" id="29791">
    <property type="antibodies" value="104 antibodies from 19 providers"/>
</dbReference>
<dbReference type="DNASU" id="79025"/>
<dbReference type="Ensembl" id="ENST00000370097.2">
    <property type="protein sequence ID" value="ENSP00000359115.1"/>
    <property type="gene ID" value="ENSG00000125531.7"/>
</dbReference>
<dbReference type="Ensembl" id="ENST00000370098.4">
    <property type="protein sequence ID" value="ENSP00000359116.3"/>
    <property type="gene ID" value="ENSG00000125531.7"/>
</dbReference>
<dbReference type="Ensembl" id="ENST00000615526.1">
    <property type="protein sequence ID" value="ENSP00000480914.1"/>
    <property type="gene ID" value="ENSG00000125531.7"/>
</dbReference>
<dbReference type="GeneID" id="79025"/>
<dbReference type="KEGG" id="hsa:79025"/>
<dbReference type="MANE-Select" id="ENST00000370097.2">
    <property type="protein sequence ID" value="ENSP00000359115.1"/>
    <property type="RefSeq nucleotide sequence ID" value="NM_001319152.2"/>
    <property type="RefSeq protein sequence ID" value="NP_001306081.1"/>
</dbReference>
<dbReference type="UCSC" id="uc002yfj.4">
    <property type="organism name" value="human"/>
</dbReference>
<dbReference type="AGR" id="HGNC:28764"/>
<dbReference type="CTD" id="79025"/>
<dbReference type="GeneCards" id="FNDC11"/>
<dbReference type="HGNC" id="HGNC:28764">
    <property type="gene designation" value="FNDC11"/>
</dbReference>
<dbReference type="HPA" id="ENSG00000125531">
    <property type="expression patterns" value="Tissue enriched (testis)"/>
</dbReference>
<dbReference type="neXtProt" id="NX_Q9BVV2"/>
<dbReference type="OpenTargets" id="ENSG00000125531"/>
<dbReference type="PharmGKB" id="PA142672215"/>
<dbReference type="VEuPathDB" id="HostDB:ENSG00000125531"/>
<dbReference type="eggNOG" id="ENOG502QW8H">
    <property type="taxonomic scope" value="Eukaryota"/>
</dbReference>
<dbReference type="GeneTree" id="ENSGT00390000006008"/>
<dbReference type="HOGENOM" id="CLU_049179_0_0_1"/>
<dbReference type="InParanoid" id="Q9BVV2"/>
<dbReference type="OMA" id="WFTESQE"/>
<dbReference type="OrthoDB" id="8699528at2759"/>
<dbReference type="PAN-GO" id="Q9BVV2">
    <property type="GO annotations" value="0 GO annotations based on evolutionary models"/>
</dbReference>
<dbReference type="PhylomeDB" id="Q9BVV2"/>
<dbReference type="TreeFam" id="TF338188"/>
<dbReference type="PathwayCommons" id="Q9BVV2"/>
<dbReference type="SignaLink" id="Q9BVV2"/>
<dbReference type="BioGRID-ORCS" id="79025">
    <property type="hits" value="15 hits in 1139 CRISPR screens"/>
</dbReference>
<dbReference type="GenomeRNAi" id="79025"/>
<dbReference type="Pharos" id="Q9BVV2">
    <property type="development level" value="Tdark"/>
</dbReference>
<dbReference type="PRO" id="PR:Q9BVV2"/>
<dbReference type="Proteomes" id="UP000005640">
    <property type="component" value="Chromosome 20"/>
</dbReference>
<dbReference type="RNAct" id="Q9BVV2">
    <property type="molecule type" value="protein"/>
</dbReference>
<dbReference type="Bgee" id="ENSG00000125531">
    <property type="expression patterns" value="Expressed in left testis and 111 other cell types or tissues"/>
</dbReference>
<dbReference type="ExpressionAtlas" id="Q9BVV2">
    <property type="expression patterns" value="baseline and differential"/>
</dbReference>
<dbReference type="CDD" id="cd00063">
    <property type="entry name" value="FN3"/>
    <property type="match status" value="1"/>
</dbReference>
<dbReference type="InterPro" id="IPR048317">
    <property type="entry name" value="DUF5581_C"/>
</dbReference>
<dbReference type="InterPro" id="IPR049231">
    <property type="entry name" value="DUF5581_N"/>
</dbReference>
<dbReference type="InterPro" id="IPR003961">
    <property type="entry name" value="FN3_dom"/>
</dbReference>
<dbReference type="InterPro" id="IPR036116">
    <property type="entry name" value="FN3_sf"/>
</dbReference>
<dbReference type="InterPro" id="IPR039581">
    <property type="entry name" value="FNDC11"/>
</dbReference>
<dbReference type="PANTHER" id="PTHR14537">
    <property type="entry name" value="FIBRONECTIN TYPE III DOMAIN-CONTAINING PROTEIN 11"/>
    <property type="match status" value="1"/>
</dbReference>
<dbReference type="Pfam" id="PF17744">
    <property type="entry name" value="DUF5581"/>
    <property type="match status" value="1"/>
</dbReference>
<dbReference type="Pfam" id="PF20996">
    <property type="entry name" value="DUF5581_N"/>
    <property type="match status" value="1"/>
</dbReference>
<dbReference type="SUPFAM" id="SSF49265">
    <property type="entry name" value="Fibronectin type III"/>
    <property type="match status" value="1"/>
</dbReference>
<dbReference type="PROSITE" id="PS50853">
    <property type="entry name" value="FN3"/>
    <property type="match status" value="1"/>
</dbReference>
<organism>
    <name type="scientific">Homo sapiens</name>
    <name type="common">Human</name>
    <dbReference type="NCBI Taxonomy" id="9606"/>
    <lineage>
        <taxon>Eukaryota</taxon>
        <taxon>Metazoa</taxon>
        <taxon>Chordata</taxon>
        <taxon>Craniata</taxon>
        <taxon>Vertebrata</taxon>
        <taxon>Euteleostomi</taxon>
        <taxon>Mammalia</taxon>
        <taxon>Eutheria</taxon>
        <taxon>Euarchontoglires</taxon>
        <taxon>Primates</taxon>
        <taxon>Haplorrhini</taxon>
        <taxon>Catarrhini</taxon>
        <taxon>Hominidae</taxon>
        <taxon>Homo</taxon>
    </lineage>
</organism>
<feature type="chain" id="PRO_0000232867" description="Fibronectin type III domain-containing protein 11">
    <location>
        <begin position="1"/>
        <end position="318"/>
    </location>
</feature>
<feature type="domain" description="Fibronectin type-III" evidence="1">
    <location>
        <begin position="210"/>
        <end position="307"/>
    </location>
</feature>
<protein>
    <recommendedName>
        <fullName>Fibronectin type III domain-containing protein 11</fullName>
    </recommendedName>
</protein>
<name>FND11_HUMAN</name>
<keyword id="KW-1267">Proteomics identification</keyword>
<keyword id="KW-1185">Reference proteome</keyword>
<comment type="interaction">
    <interactant intactId="EBI-744935">
        <id>Q9BVV2</id>
    </interactant>
    <interactant intactId="EBI-11978055">
        <id>Q10567-3</id>
        <label>AP1B1</label>
    </interactant>
    <organismsDiffer>false</organismsDiffer>
    <experiments>3</experiments>
</comment>
<comment type="interaction">
    <interactant intactId="EBI-744935">
        <id>Q9BVV2</id>
    </interactant>
    <interactant intactId="EBI-12885454">
        <id>Q96KC2</id>
        <label>ARL5B</label>
    </interactant>
    <organismsDiffer>false</organismsDiffer>
    <experiments>5</experiments>
</comment>
<comment type="interaction">
    <interactant intactId="EBI-744935">
        <id>Q9BVV2</id>
    </interactant>
    <interactant intactId="EBI-739580">
        <id>Q13137</id>
        <label>CALCOCO2</label>
    </interactant>
    <organismsDiffer>false</organismsDiffer>
    <experiments>4</experiments>
</comment>
<comment type="interaction">
    <interactant intactId="EBI-744935">
        <id>Q9BVV2</id>
    </interactant>
    <interactant intactId="EBI-10171570">
        <id>Q68D86</id>
        <label>CCDC102B</label>
    </interactant>
    <organismsDiffer>false</organismsDiffer>
    <experiments>3</experiments>
</comment>
<comment type="interaction">
    <interactant intactId="EBI-744935">
        <id>Q9BVV2</id>
    </interactant>
    <interactant intactId="EBI-9250559">
        <id>P32320</id>
        <label>CDA</label>
    </interactant>
    <organismsDiffer>false</organismsDiffer>
    <experiments>6</experiments>
</comment>
<comment type="interaction">
    <interactant intactId="EBI-744935">
        <id>Q9BVV2</id>
    </interactant>
    <interactant intactId="EBI-1773949">
        <id>Q9BXL8</id>
        <label>CDCA4</label>
    </interactant>
    <organismsDiffer>false</organismsDiffer>
    <experiments>3</experiments>
</comment>
<comment type="interaction">
    <interactant intactId="EBI-744935">
        <id>Q9BVV2</id>
    </interactant>
    <interactant intactId="EBI-375077">
        <id>P38936</id>
        <label>CDKN1A</label>
    </interactant>
    <organismsDiffer>false</organismsDiffer>
    <experiments>3</experiments>
</comment>
<comment type="interaction">
    <interactant intactId="EBI-744935">
        <id>Q9BVV2</id>
    </interactant>
    <interactant intactId="EBI-12261896">
        <id>Q5T4B2</id>
        <label>CERCAM</label>
    </interactant>
    <organismsDiffer>false</organismsDiffer>
    <experiments>3</experiments>
</comment>
<comment type="interaction">
    <interactant intactId="EBI-744935">
        <id>Q9BVV2</id>
    </interactant>
    <interactant intactId="EBI-739784">
        <id>Q9BW66</id>
        <label>CINP</label>
    </interactant>
    <organismsDiffer>false</organismsDiffer>
    <experiments>3</experiments>
</comment>
<comment type="interaction">
    <interactant intactId="EBI-744935">
        <id>Q9BVV2</id>
    </interactant>
    <interactant intactId="EBI-3866319">
        <id>Q9Y2V7</id>
        <label>COG6</label>
    </interactant>
    <organismsDiffer>false</organismsDiffer>
    <experiments>3</experiments>
</comment>
<comment type="interaction">
    <interactant intactId="EBI-744935">
        <id>Q9BVV2</id>
    </interactant>
    <interactant intactId="EBI-10175124">
        <id>Q8IZU0</id>
        <label>FAM9B</label>
    </interactant>
    <organismsDiffer>false</organismsDiffer>
    <experiments>3</experiments>
</comment>
<comment type="interaction">
    <interactant intactId="EBI-744935">
        <id>Q9BVV2</id>
    </interactant>
    <interactant intactId="EBI-618309">
        <id>Q08379</id>
        <label>GOLGA2</label>
    </interactant>
    <organismsDiffer>false</organismsDiffer>
    <experiments>3</experiments>
</comment>
<comment type="interaction">
    <interactant intactId="EBI-744935">
        <id>Q9BVV2</id>
    </interactant>
    <interactant intactId="EBI-2349758">
        <id>Q86WP2</id>
        <label>GPBP1</label>
    </interactant>
    <organismsDiffer>false</organismsDiffer>
    <experiments>11</experiments>
</comment>
<comment type="interaction">
    <interactant intactId="EBI-744935">
        <id>Q9BVV2</id>
    </interactant>
    <interactant intactId="EBI-10300058">
        <id>Q86WP2-4</id>
        <label>GPBP1</label>
    </interactant>
    <organismsDiffer>false</organismsDiffer>
    <experiments>3</experiments>
</comment>
<comment type="interaction">
    <interactant intactId="EBI-744935">
        <id>Q9BVV2</id>
    </interactant>
    <interactant intactId="EBI-740220">
        <id>O14964</id>
        <label>HGS</label>
    </interactant>
    <organismsDiffer>false</organismsDiffer>
    <experiments>3</experiments>
</comment>
<comment type="interaction">
    <interactant intactId="EBI-744935">
        <id>Q9BVV2</id>
    </interactant>
    <interactant intactId="EBI-2549423">
        <id>Q6NT76</id>
        <label>HMBOX1</label>
    </interactant>
    <organismsDiffer>false</organismsDiffer>
    <experiments>3</experiments>
</comment>
<comment type="interaction">
    <interactant intactId="EBI-744935">
        <id>Q9BVV2</id>
    </interactant>
    <interactant intactId="EBI-713450">
        <id>Q02363</id>
        <label>ID2</label>
    </interactant>
    <organismsDiffer>false</organismsDiffer>
    <experiments>3</experiments>
</comment>
<comment type="interaction">
    <interactant intactId="EBI-744935">
        <id>Q9BVV2</id>
    </interactant>
    <interactant intactId="EBI-1047093">
        <id>O76011</id>
        <label>KRT34</label>
    </interactant>
    <organismsDiffer>false</organismsDiffer>
    <experiments>3</experiments>
</comment>
<comment type="interaction">
    <interactant intactId="EBI-744935">
        <id>Q9BVV2</id>
    </interactant>
    <interactant intactId="EBI-10171697">
        <id>Q6A162</id>
        <label>KRT40</label>
    </interactant>
    <organismsDiffer>false</organismsDiffer>
    <experiments>3</experiments>
</comment>
<comment type="interaction">
    <interactant intactId="EBI-744935">
        <id>Q9BVV2</id>
    </interactant>
    <interactant intactId="EBI-12805508">
        <id>Q3LI70</id>
        <label>KRTAP19-6</label>
    </interactant>
    <organismsDiffer>false</organismsDiffer>
    <experiments>3</experiments>
</comment>
<comment type="interaction">
    <interactant intactId="EBI-744935">
        <id>Q9BVV2</id>
    </interactant>
    <interactant intactId="EBI-741037">
        <id>Q9BRK4</id>
        <label>LZTS2</label>
    </interactant>
    <organismsDiffer>false</organismsDiffer>
    <experiments>3</experiments>
</comment>
<comment type="interaction">
    <interactant intactId="EBI-744935">
        <id>Q9BVV2</id>
    </interactant>
    <interactant intactId="EBI-749530">
        <id>P43365</id>
        <label>MAGEA12</label>
    </interactant>
    <organismsDiffer>false</organismsDiffer>
    <experiments>6</experiments>
</comment>
<comment type="interaction">
    <interactant intactId="EBI-744935">
        <id>Q9BVV2</id>
    </interactant>
    <interactant intactId="EBI-724076">
        <id>Q99750</id>
        <label>MDFI</label>
    </interactant>
    <organismsDiffer>false</organismsDiffer>
    <experiments>3</experiments>
</comment>
<comment type="interaction">
    <interactant intactId="EBI-744935">
        <id>Q9BVV2</id>
    </interactant>
    <interactant intactId="EBI-1104552">
        <id>Q9NYP9</id>
        <label>MIS18A</label>
    </interactant>
    <organismsDiffer>false</organismsDiffer>
    <experiments>3</experiments>
</comment>
<comment type="interaction">
    <interactant intactId="EBI-744935">
        <id>Q9BVV2</id>
    </interactant>
    <interactant intactId="EBI-742948">
        <id>Q5JR59</id>
        <label>MTUS2</label>
    </interactant>
    <organismsDiffer>false</organismsDiffer>
    <experiments>3</experiments>
</comment>
<comment type="interaction">
    <interactant intactId="EBI-744935">
        <id>Q9BVV2</id>
    </interactant>
    <interactant intactId="EBI-359352">
        <id>P25786</id>
        <label>PSMA1</label>
    </interactant>
    <organismsDiffer>false</organismsDiffer>
    <experiments>5</experiments>
</comment>
<comment type="interaction">
    <interactant intactId="EBI-744935">
        <id>Q9BVV2</id>
    </interactant>
    <interactant intactId="EBI-740322">
        <id>Q93062</id>
        <label>RBPMS</label>
    </interactant>
    <organismsDiffer>false</organismsDiffer>
    <experiments>3</experiments>
</comment>
<comment type="interaction">
    <interactant intactId="EBI-744935">
        <id>Q9BVV2</id>
    </interactant>
    <interactant intactId="EBI-307352">
        <id>Q04864</id>
        <label>REL</label>
    </interactant>
    <organismsDiffer>false</organismsDiffer>
    <experiments>3</experiments>
</comment>
<comment type="interaction">
    <interactant intactId="EBI-744935">
        <id>Q9BVV2</id>
    </interactant>
    <interactant intactId="EBI-748391">
        <id>Q9BWG6</id>
        <label>SCNM1</label>
    </interactant>
    <organismsDiffer>false</organismsDiffer>
    <experiments>3</experiments>
</comment>
<comment type="interaction">
    <interactant intactId="EBI-744935">
        <id>Q9BVV2</id>
    </interactant>
    <interactant intactId="EBI-748601">
        <id>Q9UHV2</id>
        <label>SERTAD1</label>
    </interactant>
    <organismsDiffer>false</organismsDiffer>
    <experiments>3</experiments>
</comment>
<comment type="interaction">
    <interactant intactId="EBI-744935">
        <id>Q9BVV2</id>
    </interactant>
    <interactant intactId="EBI-395421">
        <id>Q16637</id>
        <label>SMN2</label>
    </interactant>
    <organismsDiffer>false</organismsDiffer>
    <experiments>3</experiments>
</comment>
<comment type="interaction">
    <interactant intactId="EBI-744935">
        <id>Q9BVV2</id>
    </interactant>
    <interactant intactId="EBI-741237">
        <id>O60504</id>
        <label>SORBS3</label>
    </interactant>
    <organismsDiffer>false</organismsDiffer>
    <experiments>3</experiments>
</comment>
<comment type="interaction">
    <interactant intactId="EBI-744935">
        <id>Q9BVV2</id>
    </interactant>
    <interactant intactId="EBI-2212028">
        <id>Q9Y2D8</id>
        <label>SSX2IP</label>
    </interactant>
    <organismsDiffer>false</organismsDiffer>
    <experiments>3</experiments>
</comment>
<comment type="interaction">
    <interactant intactId="EBI-744935">
        <id>Q9BVV2</id>
    </interactant>
    <interactant intactId="EBI-719493">
        <id>P14373</id>
        <label>TRIM27</label>
    </interactant>
    <organismsDiffer>false</organismsDiffer>
    <experiments>3</experiments>
</comment>
<comment type="interaction">
    <interactant intactId="EBI-744935">
        <id>Q9BVV2</id>
    </interactant>
    <interactant intactId="EBI-947187">
        <id>Q9UHD9</id>
        <label>UBQLN2</label>
    </interactant>
    <organismsDiffer>false</organismsDiffer>
    <experiments>3</experiments>
</comment>
<comment type="interaction">
    <interactant intactId="EBI-744935">
        <id>Q9BVV2</id>
    </interactant>
    <interactant intactId="EBI-740037">
        <id>O96006</id>
        <label>ZBED1</label>
    </interactant>
    <organismsDiffer>false</organismsDiffer>
    <experiments>3</experiments>
</comment>
<comment type="interaction">
    <interactant intactId="EBI-744935">
        <id>Q9BVV2</id>
    </interactant>
    <interactant intactId="EBI-12006434">
        <id>Q96MX3</id>
        <label>ZNF48</label>
    </interactant>
    <organismsDiffer>false</organismsDiffer>
    <experiments>3</experiments>
</comment>
<comment type="interaction">
    <interactant intactId="EBI-744935">
        <id>Q9BVV2</id>
    </interactant>
    <interactant intactId="EBI-527853">
        <id>Q9UGI0</id>
        <label>ZRANB1</label>
    </interactant>
    <organismsDiffer>false</organismsDiffer>
    <experiments>3</experiments>
</comment>
<gene>
    <name type="primary">FNDC11</name>
    <name type="synonym">C20orf195</name>
</gene>
<accession>Q9BVV2</accession>
<sequence>MSTHVAGLGLDKMKLGNPQSFLDQEEADDQQLLEPEAWKTYTERRNALREFLTSDLSPHLLKRHHARMQLLRKCSYYIEVLPKHLALGDQNPLVLPSALFQLIDPWKFQRMKKVGTAQTKIQLLLLGDLLEQLDHGRAELDALLRSPDPRPFLADWALVERRLADVSAVMDSFLTMMVPGRLHVKHRLVSDVSATKIPHIWLMLSTKMPVVFDRKASAAHQDWARLRWFVTIQPATSEQYELRFRLLDPRTQQECAQCGVIPVAACTFDVRNLLPNRSYKFTIKRAETSTLVYEPWRDSLTLHTKPEPLEGPALSHSV</sequence>
<proteinExistence type="evidence at protein level"/>